<organism>
    <name type="scientific">Limosilactobacillus reuteri (strain DSM 20016)</name>
    <name type="common">Lactobacillus reuteri</name>
    <dbReference type="NCBI Taxonomy" id="557436"/>
    <lineage>
        <taxon>Bacteria</taxon>
        <taxon>Bacillati</taxon>
        <taxon>Bacillota</taxon>
        <taxon>Bacilli</taxon>
        <taxon>Lactobacillales</taxon>
        <taxon>Lactobacillaceae</taxon>
        <taxon>Limosilactobacillus</taxon>
    </lineage>
</organism>
<protein>
    <recommendedName>
        <fullName evidence="1">Large ribosomal subunit protein uL30</fullName>
    </recommendedName>
    <alternativeName>
        <fullName evidence="2">50S ribosomal protein L30</fullName>
    </alternativeName>
</protein>
<proteinExistence type="inferred from homology"/>
<feature type="chain" id="PRO_1000068198" description="Large ribosomal subunit protein uL30">
    <location>
        <begin position="1"/>
        <end position="60"/>
    </location>
</feature>
<keyword id="KW-1185">Reference proteome</keyword>
<keyword id="KW-0687">Ribonucleoprotein</keyword>
<keyword id="KW-0689">Ribosomal protein</keyword>
<comment type="subunit">
    <text evidence="1">Part of the 50S ribosomal subunit.</text>
</comment>
<comment type="similarity">
    <text evidence="1">Belongs to the universal ribosomal protein uL30 family.</text>
</comment>
<reference key="1">
    <citation type="journal article" date="2011" name="PLoS Genet.">
        <title>The evolution of host specialization in the vertebrate gut symbiont Lactobacillus reuteri.</title>
        <authorList>
            <person name="Frese S.A."/>
            <person name="Benson A.K."/>
            <person name="Tannock G.W."/>
            <person name="Loach D.M."/>
            <person name="Kim J."/>
            <person name="Zhang M."/>
            <person name="Oh P.L."/>
            <person name="Heng N.C."/>
            <person name="Patil P.B."/>
            <person name="Juge N."/>
            <person name="Mackenzie D.A."/>
            <person name="Pearson B.M."/>
            <person name="Lapidus A."/>
            <person name="Dalin E."/>
            <person name="Tice H."/>
            <person name="Goltsman E."/>
            <person name="Land M."/>
            <person name="Hauser L."/>
            <person name="Ivanova N."/>
            <person name="Kyrpides N.C."/>
            <person name="Walter J."/>
        </authorList>
    </citation>
    <scope>NUCLEOTIDE SEQUENCE [LARGE SCALE GENOMIC DNA]</scope>
    <source>
        <strain>DSM 20016</strain>
    </source>
</reference>
<sequence length="60" mass="6557">MAQVKVTLIHSVAHRQPTQRRTVKALGLGKINSSVILPDNAATRGQIFKIAHLVSVEEVK</sequence>
<gene>
    <name evidence="1" type="primary">rpmD</name>
    <name type="ordered locus">Lreu_1465</name>
</gene>
<dbReference type="EMBL" id="CP000705">
    <property type="protein sequence ID" value="ABQ83711.1"/>
    <property type="molecule type" value="Genomic_DNA"/>
</dbReference>
<dbReference type="RefSeq" id="WP_003664541.1">
    <property type="nucleotide sequence ID" value="NZ_AZDD01000010.1"/>
</dbReference>
<dbReference type="SMR" id="A5VLI7"/>
<dbReference type="STRING" id="557436.Lreu_1465"/>
<dbReference type="GeneID" id="77191461"/>
<dbReference type="KEGG" id="lre:Lreu_1465"/>
<dbReference type="PATRIC" id="fig|557436.17.peg.158"/>
<dbReference type="eggNOG" id="COG1841">
    <property type="taxonomic scope" value="Bacteria"/>
</dbReference>
<dbReference type="HOGENOM" id="CLU_131047_2_1_9"/>
<dbReference type="Proteomes" id="UP000001991">
    <property type="component" value="Chromosome"/>
</dbReference>
<dbReference type="GO" id="GO:0022625">
    <property type="term" value="C:cytosolic large ribosomal subunit"/>
    <property type="evidence" value="ECO:0007669"/>
    <property type="project" value="TreeGrafter"/>
</dbReference>
<dbReference type="GO" id="GO:0003735">
    <property type="term" value="F:structural constituent of ribosome"/>
    <property type="evidence" value="ECO:0007669"/>
    <property type="project" value="InterPro"/>
</dbReference>
<dbReference type="GO" id="GO:0006412">
    <property type="term" value="P:translation"/>
    <property type="evidence" value="ECO:0007669"/>
    <property type="project" value="UniProtKB-UniRule"/>
</dbReference>
<dbReference type="CDD" id="cd01658">
    <property type="entry name" value="Ribosomal_L30"/>
    <property type="match status" value="1"/>
</dbReference>
<dbReference type="Gene3D" id="3.30.1390.20">
    <property type="entry name" value="Ribosomal protein L30, ferredoxin-like fold domain"/>
    <property type="match status" value="1"/>
</dbReference>
<dbReference type="HAMAP" id="MF_01371_B">
    <property type="entry name" value="Ribosomal_uL30_B"/>
    <property type="match status" value="1"/>
</dbReference>
<dbReference type="InterPro" id="IPR036919">
    <property type="entry name" value="Ribo_uL30_ferredoxin-like_sf"/>
</dbReference>
<dbReference type="InterPro" id="IPR005996">
    <property type="entry name" value="Ribosomal_uL30_bac-type"/>
</dbReference>
<dbReference type="InterPro" id="IPR016082">
    <property type="entry name" value="Ribosomal_uL30_ferredoxin-like"/>
</dbReference>
<dbReference type="NCBIfam" id="TIGR01308">
    <property type="entry name" value="rpmD_bact"/>
    <property type="match status" value="1"/>
</dbReference>
<dbReference type="PANTHER" id="PTHR15892:SF2">
    <property type="entry name" value="LARGE RIBOSOMAL SUBUNIT PROTEIN UL30M"/>
    <property type="match status" value="1"/>
</dbReference>
<dbReference type="PANTHER" id="PTHR15892">
    <property type="entry name" value="MITOCHONDRIAL RIBOSOMAL PROTEIN L30"/>
    <property type="match status" value="1"/>
</dbReference>
<dbReference type="Pfam" id="PF00327">
    <property type="entry name" value="Ribosomal_L30"/>
    <property type="match status" value="1"/>
</dbReference>
<dbReference type="PIRSF" id="PIRSF002211">
    <property type="entry name" value="Ribosomal_L30_bac-type"/>
    <property type="match status" value="1"/>
</dbReference>
<dbReference type="SUPFAM" id="SSF55129">
    <property type="entry name" value="Ribosomal protein L30p/L7e"/>
    <property type="match status" value="1"/>
</dbReference>
<accession>A5VLI7</accession>
<name>RL30_LIMRD</name>
<evidence type="ECO:0000255" key="1">
    <source>
        <dbReference type="HAMAP-Rule" id="MF_01371"/>
    </source>
</evidence>
<evidence type="ECO:0000305" key="2"/>